<reference key="1">
    <citation type="journal article" date="2005" name="Nat. Biotechnol.">
        <title>Genome sequence of the chlorinated compound-respiring bacterium Dehalococcoides species strain CBDB1.</title>
        <authorList>
            <person name="Kube M."/>
            <person name="Beck A."/>
            <person name="Zinder S.H."/>
            <person name="Kuhl H."/>
            <person name="Reinhardt R."/>
            <person name="Adrian L."/>
        </authorList>
    </citation>
    <scope>NUCLEOTIDE SEQUENCE [LARGE SCALE GENOMIC DNA]</scope>
    <source>
        <strain>CBDB1</strain>
    </source>
</reference>
<dbReference type="EC" id="1.2.1.38" evidence="1"/>
<dbReference type="EMBL" id="AJ965256">
    <property type="protein sequence ID" value="CAI83722.1"/>
    <property type="molecule type" value="Genomic_DNA"/>
</dbReference>
<dbReference type="RefSeq" id="WP_011310060.1">
    <property type="nucleotide sequence ID" value="NC_007356.1"/>
</dbReference>
<dbReference type="SMR" id="Q3ZZX5"/>
<dbReference type="KEGG" id="deh:cbdbA1722"/>
<dbReference type="HOGENOM" id="CLU_006384_0_1_0"/>
<dbReference type="UniPathway" id="UPA00068">
    <property type="reaction ID" value="UER00108"/>
</dbReference>
<dbReference type="Proteomes" id="UP000000433">
    <property type="component" value="Chromosome"/>
</dbReference>
<dbReference type="GO" id="GO:0005737">
    <property type="term" value="C:cytoplasm"/>
    <property type="evidence" value="ECO:0007669"/>
    <property type="project" value="UniProtKB-SubCell"/>
</dbReference>
<dbReference type="GO" id="GO:0003942">
    <property type="term" value="F:N-acetyl-gamma-glutamyl-phosphate reductase activity"/>
    <property type="evidence" value="ECO:0007669"/>
    <property type="project" value="UniProtKB-UniRule"/>
</dbReference>
<dbReference type="GO" id="GO:0051287">
    <property type="term" value="F:NAD binding"/>
    <property type="evidence" value="ECO:0007669"/>
    <property type="project" value="InterPro"/>
</dbReference>
<dbReference type="GO" id="GO:0070401">
    <property type="term" value="F:NADP+ binding"/>
    <property type="evidence" value="ECO:0007669"/>
    <property type="project" value="InterPro"/>
</dbReference>
<dbReference type="GO" id="GO:0006526">
    <property type="term" value="P:L-arginine biosynthetic process"/>
    <property type="evidence" value="ECO:0007669"/>
    <property type="project" value="UniProtKB-UniRule"/>
</dbReference>
<dbReference type="CDD" id="cd23934">
    <property type="entry name" value="AGPR_1_C"/>
    <property type="match status" value="1"/>
</dbReference>
<dbReference type="CDD" id="cd17895">
    <property type="entry name" value="AGPR_1_N"/>
    <property type="match status" value="1"/>
</dbReference>
<dbReference type="FunFam" id="3.30.360.10:FF:000014">
    <property type="entry name" value="N-acetyl-gamma-glutamyl-phosphate reductase"/>
    <property type="match status" value="1"/>
</dbReference>
<dbReference type="Gene3D" id="3.30.360.10">
    <property type="entry name" value="Dihydrodipicolinate Reductase, domain 2"/>
    <property type="match status" value="1"/>
</dbReference>
<dbReference type="Gene3D" id="3.40.50.720">
    <property type="entry name" value="NAD(P)-binding Rossmann-like Domain"/>
    <property type="match status" value="1"/>
</dbReference>
<dbReference type="HAMAP" id="MF_00150">
    <property type="entry name" value="ArgC_type1"/>
    <property type="match status" value="1"/>
</dbReference>
<dbReference type="InterPro" id="IPR023013">
    <property type="entry name" value="AGPR_AS"/>
</dbReference>
<dbReference type="InterPro" id="IPR000706">
    <property type="entry name" value="AGPR_type-1"/>
</dbReference>
<dbReference type="InterPro" id="IPR036291">
    <property type="entry name" value="NAD(P)-bd_dom_sf"/>
</dbReference>
<dbReference type="InterPro" id="IPR050085">
    <property type="entry name" value="NAGSA_dehydrogenase"/>
</dbReference>
<dbReference type="InterPro" id="IPR000534">
    <property type="entry name" value="Semialdehyde_DH_NAD-bd"/>
</dbReference>
<dbReference type="NCBIfam" id="TIGR01850">
    <property type="entry name" value="argC"/>
    <property type="match status" value="1"/>
</dbReference>
<dbReference type="PANTHER" id="PTHR32338:SF10">
    <property type="entry name" value="N-ACETYL-GAMMA-GLUTAMYL-PHOSPHATE REDUCTASE, CHLOROPLASTIC-RELATED"/>
    <property type="match status" value="1"/>
</dbReference>
<dbReference type="PANTHER" id="PTHR32338">
    <property type="entry name" value="N-ACETYL-GAMMA-GLUTAMYL-PHOSPHATE REDUCTASE, CHLOROPLASTIC-RELATED-RELATED"/>
    <property type="match status" value="1"/>
</dbReference>
<dbReference type="Pfam" id="PF01118">
    <property type="entry name" value="Semialdhyde_dh"/>
    <property type="match status" value="1"/>
</dbReference>
<dbReference type="Pfam" id="PF22698">
    <property type="entry name" value="Semialdhyde_dhC_1"/>
    <property type="match status" value="1"/>
</dbReference>
<dbReference type="SMART" id="SM00859">
    <property type="entry name" value="Semialdhyde_dh"/>
    <property type="match status" value="1"/>
</dbReference>
<dbReference type="SUPFAM" id="SSF55347">
    <property type="entry name" value="Glyceraldehyde-3-phosphate dehydrogenase-like, C-terminal domain"/>
    <property type="match status" value="1"/>
</dbReference>
<dbReference type="SUPFAM" id="SSF51735">
    <property type="entry name" value="NAD(P)-binding Rossmann-fold domains"/>
    <property type="match status" value="1"/>
</dbReference>
<dbReference type="PROSITE" id="PS01224">
    <property type="entry name" value="ARGC"/>
    <property type="match status" value="1"/>
</dbReference>
<comment type="function">
    <text evidence="1">Catalyzes the NADPH-dependent reduction of N-acetyl-5-glutamyl phosphate to yield N-acetyl-L-glutamate 5-semialdehyde.</text>
</comment>
<comment type="catalytic activity">
    <reaction evidence="1">
        <text>N-acetyl-L-glutamate 5-semialdehyde + phosphate + NADP(+) = N-acetyl-L-glutamyl 5-phosphate + NADPH + H(+)</text>
        <dbReference type="Rhea" id="RHEA:21588"/>
        <dbReference type="ChEBI" id="CHEBI:15378"/>
        <dbReference type="ChEBI" id="CHEBI:29123"/>
        <dbReference type="ChEBI" id="CHEBI:43474"/>
        <dbReference type="ChEBI" id="CHEBI:57783"/>
        <dbReference type="ChEBI" id="CHEBI:57936"/>
        <dbReference type="ChEBI" id="CHEBI:58349"/>
        <dbReference type="EC" id="1.2.1.38"/>
    </reaction>
</comment>
<comment type="pathway">
    <text evidence="1">Amino-acid biosynthesis; L-arginine biosynthesis; N(2)-acetyl-L-ornithine from L-glutamate: step 3/4.</text>
</comment>
<comment type="subcellular location">
    <subcellularLocation>
        <location evidence="1">Cytoplasm</location>
    </subcellularLocation>
</comment>
<comment type="similarity">
    <text evidence="1">Belongs to the NAGSA dehydrogenase family. Type 1 subfamily.</text>
</comment>
<proteinExistence type="inferred from homology"/>
<evidence type="ECO:0000255" key="1">
    <source>
        <dbReference type="HAMAP-Rule" id="MF_00150"/>
    </source>
</evidence>
<sequence length="341" mass="37309">MKKYKTGIINVTGYAGLELARILESHPSVELCSVTGRSLAGKKLSDVFPYLHRLDLPITENLEGQVDVAFLALPHKEGAALVPALLEKGMRVIDISADFRLKDPALYQAWYGFEHPCPGLLEEAVYGLPELKRKDIAGARLVANPGCYPTSAILGLVPAFKSDLIEPSAIIDAKSGLSGSGRTPTVKTIFCEADEDVCAYSIGTHRHQPEIVQELCRASRGVIPRVTFCPHLVPMSRGILSTAYARLKQPVTDEEVKEIYRQFYKDEPFVKVTAEPPHTRYTRGTNMCFIYPVVDALNEQLIVISCIDNLVKGAAGQAVQNMNIMLGLAETEGLEAMATLP</sequence>
<feature type="chain" id="PRO_1000118058" description="N-acetyl-gamma-glutamyl-phosphate reductase">
    <location>
        <begin position="1"/>
        <end position="341"/>
    </location>
</feature>
<feature type="active site" evidence="1">
    <location>
        <position position="147"/>
    </location>
</feature>
<name>ARGC_DEHMC</name>
<accession>Q3ZZX5</accession>
<protein>
    <recommendedName>
        <fullName evidence="1">N-acetyl-gamma-glutamyl-phosphate reductase</fullName>
        <shortName evidence="1">AGPR</shortName>
        <ecNumber evidence="1">1.2.1.38</ecNumber>
    </recommendedName>
    <alternativeName>
        <fullName evidence="1">N-acetyl-glutamate semialdehyde dehydrogenase</fullName>
        <shortName evidence="1">NAGSA dehydrogenase</shortName>
    </alternativeName>
</protein>
<keyword id="KW-0028">Amino-acid biosynthesis</keyword>
<keyword id="KW-0055">Arginine biosynthesis</keyword>
<keyword id="KW-0963">Cytoplasm</keyword>
<keyword id="KW-0521">NADP</keyword>
<keyword id="KW-0560">Oxidoreductase</keyword>
<gene>
    <name evidence="1" type="primary">argC</name>
    <name type="ordered locus">cbdbA1722</name>
</gene>
<organism>
    <name type="scientific">Dehalococcoides mccartyi (strain CBDB1)</name>
    <dbReference type="NCBI Taxonomy" id="255470"/>
    <lineage>
        <taxon>Bacteria</taxon>
        <taxon>Bacillati</taxon>
        <taxon>Chloroflexota</taxon>
        <taxon>Dehalococcoidia</taxon>
        <taxon>Dehalococcoidales</taxon>
        <taxon>Dehalococcoidaceae</taxon>
        <taxon>Dehalococcoides</taxon>
    </lineage>
</organism>